<name>PTH_HELP2</name>
<organism>
    <name type="scientific">Helicobacter pylori (strain P12)</name>
    <dbReference type="NCBI Taxonomy" id="570508"/>
    <lineage>
        <taxon>Bacteria</taxon>
        <taxon>Pseudomonadati</taxon>
        <taxon>Campylobacterota</taxon>
        <taxon>Epsilonproteobacteria</taxon>
        <taxon>Campylobacterales</taxon>
        <taxon>Helicobacteraceae</taxon>
        <taxon>Helicobacter</taxon>
    </lineage>
</organism>
<gene>
    <name evidence="1" type="primary">pth</name>
    <name type="ordered locus">HPP12_1475</name>
</gene>
<feature type="chain" id="PRO_1000092946" description="Peptidyl-tRNA hydrolase">
    <location>
        <begin position="1"/>
        <end position="186"/>
    </location>
</feature>
<feature type="active site" description="Proton acceptor" evidence="1">
    <location>
        <position position="19"/>
    </location>
</feature>
<feature type="binding site" evidence="1">
    <location>
        <position position="14"/>
    </location>
    <ligand>
        <name>tRNA</name>
        <dbReference type="ChEBI" id="CHEBI:17843"/>
    </ligand>
</feature>
<feature type="binding site" evidence="1">
    <location>
        <position position="61"/>
    </location>
    <ligand>
        <name>tRNA</name>
        <dbReference type="ChEBI" id="CHEBI:17843"/>
    </ligand>
</feature>
<feature type="binding site" evidence="1">
    <location>
        <position position="63"/>
    </location>
    <ligand>
        <name>tRNA</name>
        <dbReference type="ChEBI" id="CHEBI:17843"/>
    </ligand>
</feature>
<feature type="binding site" evidence="1">
    <location>
        <position position="107"/>
    </location>
    <ligand>
        <name>tRNA</name>
        <dbReference type="ChEBI" id="CHEBI:17843"/>
    </ligand>
</feature>
<feature type="site" description="Discriminates between blocked and unblocked aminoacyl-tRNA" evidence="1">
    <location>
        <position position="9"/>
    </location>
</feature>
<feature type="site" description="Stabilizes the basic form of H active site to accept a proton" evidence="1">
    <location>
        <position position="86"/>
    </location>
</feature>
<comment type="function">
    <text evidence="1">Hydrolyzes ribosome-free peptidyl-tRNAs (with 1 or more amino acids incorporated), which drop off the ribosome during protein synthesis, or as a result of ribosome stalling.</text>
</comment>
<comment type="function">
    <text evidence="1">Catalyzes the release of premature peptidyl moieties from peptidyl-tRNA molecules trapped in stalled 50S ribosomal subunits, and thus maintains levels of free tRNAs and 50S ribosomes.</text>
</comment>
<comment type="catalytic activity">
    <reaction evidence="1">
        <text>an N-acyl-L-alpha-aminoacyl-tRNA + H2O = an N-acyl-L-amino acid + a tRNA + H(+)</text>
        <dbReference type="Rhea" id="RHEA:54448"/>
        <dbReference type="Rhea" id="RHEA-COMP:10123"/>
        <dbReference type="Rhea" id="RHEA-COMP:13883"/>
        <dbReference type="ChEBI" id="CHEBI:15377"/>
        <dbReference type="ChEBI" id="CHEBI:15378"/>
        <dbReference type="ChEBI" id="CHEBI:59874"/>
        <dbReference type="ChEBI" id="CHEBI:78442"/>
        <dbReference type="ChEBI" id="CHEBI:138191"/>
        <dbReference type="EC" id="3.1.1.29"/>
    </reaction>
</comment>
<comment type="subunit">
    <text evidence="1">Monomer.</text>
</comment>
<comment type="subcellular location">
    <subcellularLocation>
        <location evidence="1">Cytoplasm</location>
    </subcellularLocation>
</comment>
<comment type="similarity">
    <text evidence="1">Belongs to the PTH family.</text>
</comment>
<dbReference type="EC" id="3.1.1.29" evidence="1"/>
<dbReference type="EMBL" id="CP001217">
    <property type="protein sequence ID" value="ACJ08623.1"/>
    <property type="molecule type" value="Genomic_DNA"/>
</dbReference>
<dbReference type="SMR" id="B6JNZ5"/>
<dbReference type="KEGG" id="hpp:HPP12_1475"/>
<dbReference type="HOGENOM" id="CLU_062456_4_1_7"/>
<dbReference type="Proteomes" id="UP000008198">
    <property type="component" value="Chromosome"/>
</dbReference>
<dbReference type="GO" id="GO:0005737">
    <property type="term" value="C:cytoplasm"/>
    <property type="evidence" value="ECO:0007669"/>
    <property type="project" value="UniProtKB-SubCell"/>
</dbReference>
<dbReference type="GO" id="GO:0004045">
    <property type="term" value="F:peptidyl-tRNA hydrolase activity"/>
    <property type="evidence" value="ECO:0007669"/>
    <property type="project" value="UniProtKB-UniRule"/>
</dbReference>
<dbReference type="GO" id="GO:0000049">
    <property type="term" value="F:tRNA binding"/>
    <property type="evidence" value="ECO:0007669"/>
    <property type="project" value="UniProtKB-UniRule"/>
</dbReference>
<dbReference type="GO" id="GO:0006515">
    <property type="term" value="P:protein quality control for misfolded or incompletely synthesized proteins"/>
    <property type="evidence" value="ECO:0007669"/>
    <property type="project" value="UniProtKB-UniRule"/>
</dbReference>
<dbReference type="GO" id="GO:0072344">
    <property type="term" value="P:rescue of stalled ribosome"/>
    <property type="evidence" value="ECO:0007669"/>
    <property type="project" value="UniProtKB-UniRule"/>
</dbReference>
<dbReference type="CDD" id="cd00462">
    <property type="entry name" value="PTH"/>
    <property type="match status" value="1"/>
</dbReference>
<dbReference type="FunFam" id="3.40.50.1470:FF:000001">
    <property type="entry name" value="Peptidyl-tRNA hydrolase"/>
    <property type="match status" value="1"/>
</dbReference>
<dbReference type="Gene3D" id="3.40.50.1470">
    <property type="entry name" value="Peptidyl-tRNA hydrolase"/>
    <property type="match status" value="1"/>
</dbReference>
<dbReference type="HAMAP" id="MF_00083">
    <property type="entry name" value="Pept_tRNA_hydro_bact"/>
    <property type="match status" value="1"/>
</dbReference>
<dbReference type="InterPro" id="IPR001328">
    <property type="entry name" value="Pept_tRNA_hydro"/>
</dbReference>
<dbReference type="InterPro" id="IPR018171">
    <property type="entry name" value="Pept_tRNA_hydro_CS"/>
</dbReference>
<dbReference type="InterPro" id="IPR036416">
    <property type="entry name" value="Pept_tRNA_hydro_sf"/>
</dbReference>
<dbReference type="NCBIfam" id="TIGR00447">
    <property type="entry name" value="pth"/>
    <property type="match status" value="1"/>
</dbReference>
<dbReference type="PANTHER" id="PTHR17224">
    <property type="entry name" value="PEPTIDYL-TRNA HYDROLASE"/>
    <property type="match status" value="1"/>
</dbReference>
<dbReference type="PANTHER" id="PTHR17224:SF1">
    <property type="entry name" value="PEPTIDYL-TRNA HYDROLASE"/>
    <property type="match status" value="1"/>
</dbReference>
<dbReference type="Pfam" id="PF01195">
    <property type="entry name" value="Pept_tRNA_hydro"/>
    <property type="match status" value="1"/>
</dbReference>
<dbReference type="SUPFAM" id="SSF53178">
    <property type="entry name" value="Peptidyl-tRNA hydrolase-like"/>
    <property type="match status" value="1"/>
</dbReference>
<dbReference type="PROSITE" id="PS01195">
    <property type="entry name" value="PEPT_TRNA_HYDROL_1"/>
    <property type="match status" value="1"/>
</dbReference>
<dbReference type="PROSITE" id="PS01196">
    <property type="entry name" value="PEPT_TRNA_HYDROL_2"/>
    <property type="match status" value="1"/>
</dbReference>
<accession>B6JNZ5</accession>
<proteinExistence type="inferred from homology"/>
<sequence>MTLLVGLGNPTLRYAHTRHNAGFDILDSLVSELDLSFTFSSKHNAYLCVYKDFILLKPQTYMNLSGESVLSAKNFYKPKELLIVHDDLDLPLGVVRFKKGGGNGGHNGLKSIDLLCSNSYYRLRVGISKGIDVIEHVLSKFHKNEEPLKNAVFEHAKNALKFFIESHDFNAMQNRFTLKKPLIIES</sequence>
<keyword id="KW-0963">Cytoplasm</keyword>
<keyword id="KW-0378">Hydrolase</keyword>
<keyword id="KW-0694">RNA-binding</keyword>
<keyword id="KW-0820">tRNA-binding</keyword>
<evidence type="ECO:0000255" key="1">
    <source>
        <dbReference type="HAMAP-Rule" id="MF_00083"/>
    </source>
</evidence>
<reference key="1">
    <citation type="submission" date="2008-10" db="EMBL/GenBank/DDBJ databases">
        <title>The complete genome sequence of Helicobacter pylori strain P12.</title>
        <authorList>
            <person name="Fischer W."/>
            <person name="Windhager L."/>
            <person name="Karnholz A."/>
            <person name="Zeiller M."/>
            <person name="Zimmer R."/>
            <person name="Haas R."/>
        </authorList>
    </citation>
    <scope>NUCLEOTIDE SEQUENCE [LARGE SCALE GENOMIC DNA]</scope>
    <source>
        <strain>P12</strain>
    </source>
</reference>
<protein>
    <recommendedName>
        <fullName evidence="1">Peptidyl-tRNA hydrolase</fullName>
        <shortName evidence="1">Pth</shortName>
        <ecNumber evidence="1">3.1.1.29</ecNumber>
    </recommendedName>
</protein>